<evidence type="ECO:0000255" key="1">
    <source>
        <dbReference type="HAMAP-Rule" id="MF_01454"/>
    </source>
</evidence>
<evidence type="ECO:0000255" key="2">
    <source>
        <dbReference type="PROSITE-ProRule" id="PRU01231"/>
    </source>
</evidence>
<protein>
    <recommendedName>
        <fullName evidence="1">GTPase Obg</fullName>
        <ecNumber evidence="1">3.6.5.-</ecNumber>
    </recommendedName>
    <alternativeName>
        <fullName evidence="1">GTP-binding protein Obg</fullName>
    </alternativeName>
</protein>
<accession>A1RMV6</accession>
<keyword id="KW-0963">Cytoplasm</keyword>
<keyword id="KW-0342">GTP-binding</keyword>
<keyword id="KW-0378">Hydrolase</keyword>
<keyword id="KW-0460">Magnesium</keyword>
<keyword id="KW-0479">Metal-binding</keyword>
<keyword id="KW-0547">Nucleotide-binding</keyword>
<proteinExistence type="inferred from homology"/>
<sequence length="388" mass="42964">MKFVDEAVIRVEAGDGGSGCVSFRREKYVPDGGPDGGDGGDGGSVYLQADENFNTLIEFRFERFHMAERGENGRGRDCTGHSGKDLILKVPVGTRAIDHDTEEVLGDLTTHGQKLLVAKGGFHGLGNTRFKSSTNRAPRQKTLGTPGEVRSLKLELLLLADVGLLGMPNAGKSTFIRAVSRATPKVADYPFTTLVPNLGVVNPRPGQSFVIADIPGLIEGAAEGAGLGIRFLKHLERCRILLHIIDIEPIDGTDPVESARAIVGELEKYSPKLASKPRWLVFNKTDLLLEEELQEKVERIVKELEWEGDVYTISAYNREGTKELALKLLDYIASLPPEDNVVNPDDEVEFKWDNYHQANLDSVNEDYDDDFDDDFDDDDYDVEVIYQR</sequence>
<organism>
    <name type="scientific">Shewanella sp. (strain W3-18-1)</name>
    <dbReference type="NCBI Taxonomy" id="351745"/>
    <lineage>
        <taxon>Bacteria</taxon>
        <taxon>Pseudomonadati</taxon>
        <taxon>Pseudomonadota</taxon>
        <taxon>Gammaproteobacteria</taxon>
        <taxon>Alteromonadales</taxon>
        <taxon>Shewanellaceae</taxon>
        <taxon>Shewanella</taxon>
    </lineage>
</organism>
<name>OBG_SHESW</name>
<reference key="1">
    <citation type="submission" date="2006-12" db="EMBL/GenBank/DDBJ databases">
        <title>Complete sequence of Shewanella sp. W3-18-1.</title>
        <authorList>
            <consortium name="US DOE Joint Genome Institute"/>
            <person name="Copeland A."/>
            <person name="Lucas S."/>
            <person name="Lapidus A."/>
            <person name="Barry K."/>
            <person name="Detter J.C."/>
            <person name="Glavina del Rio T."/>
            <person name="Hammon N."/>
            <person name="Israni S."/>
            <person name="Dalin E."/>
            <person name="Tice H."/>
            <person name="Pitluck S."/>
            <person name="Chain P."/>
            <person name="Malfatti S."/>
            <person name="Shin M."/>
            <person name="Vergez L."/>
            <person name="Schmutz J."/>
            <person name="Larimer F."/>
            <person name="Land M."/>
            <person name="Hauser L."/>
            <person name="Kyrpides N."/>
            <person name="Lykidis A."/>
            <person name="Tiedje J."/>
            <person name="Richardson P."/>
        </authorList>
    </citation>
    <scope>NUCLEOTIDE SEQUENCE [LARGE SCALE GENOMIC DNA]</scope>
    <source>
        <strain>W3-18-1</strain>
    </source>
</reference>
<gene>
    <name evidence="1" type="primary">obg</name>
    <name type="ordered locus">Sputw3181_3186</name>
</gene>
<comment type="function">
    <text evidence="1">An essential GTPase which binds GTP, GDP and possibly (p)ppGpp with moderate affinity, with high nucleotide exchange rates and a fairly low GTP hydrolysis rate. Plays a role in control of the cell cycle, stress response, ribosome biogenesis and in those bacteria that undergo differentiation, in morphogenesis control.</text>
</comment>
<comment type="cofactor">
    <cofactor evidence="1">
        <name>Mg(2+)</name>
        <dbReference type="ChEBI" id="CHEBI:18420"/>
    </cofactor>
</comment>
<comment type="subunit">
    <text evidence="1">Monomer.</text>
</comment>
<comment type="subcellular location">
    <subcellularLocation>
        <location evidence="1">Cytoplasm</location>
    </subcellularLocation>
</comment>
<comment type="similarity">
    <text evidence="1">Belongs to the TRAFAC class OBG-HflX-like GTPase superfamily. OBG GTPase family.</text>
</comment>
<dbReference type="EC" id="3.6.5.-" evidence="1"/>
<dbReference type="EMBL" id="CP000503">
    <property type="protein sequence ID" value="ABM26001.1"/>
    <property type="molecule type" value="Genomic_DNA"/>
</dbReference>
<dbReference type="SMR" id="A1RMV6"/>
<dbReference type="KEGG" id="shw:Sputw3181_3186"/>
<dbReference type="HOGENOM" id="CLU_011747_2_0_6"/>
<dbReference type="Proteomes" id="UP000002597">
    <property type="component" value="Chromosome"/>
</dbReference>
<dbReference type="GO" id="GO:0005737">
    <property type="term" value="C:cytoplasm"/>
    <property type="evidence" value="ECO:0007669"/>
    <property type="project" value="UniProtKB-SubCell"/>
</dbReference>
<dbReference type="GO" id="GO:0005525">
    <property type="term" value="F:GTP binding"/>
    <property type="evidence" value="ECO:0007669"/>
    <property type="project" value="UniProtKB-UniRule"/>
</dbReference>
<dbReference type="GO" id="GO:0003924">
    <property type="term" value="F:GTPase activity"/>
    <property type="evidence" value="ECO:0007669"/>
    <property type="project" value="UniProtKB-UniRule"/>
</dbReference>
<dbReference type="GO" id="GO:0000287">
    <property type="term" value="F:magnesium ion binding"/>
    <property type="evidence" value="ECO:0007669"/>
    <property type="project" value="InterPro"/>
</dbReference>
<dbReference type="GO" id="GO:0042254">
    <property type="term" value="P:ribosome biogenesis"/>
    <property type="evidence" value="ECO:0007669"/>
    <property type="project" value="UniProtKB-UniRule"/>
</dbReference>
<dbReference type="CDD" id="cd01898">
    <property type="entry name" value="Obg"/>
    <property type="match status" value="1"/>
</dbReference>
<dbReference type="FunFam" id="2.70.210.12:FF:000001">
    <property type="entry name" value="GTPase Obg"/>
    <property type="match status" value="1"/>
</dbReference>
<dbReference type="Gene3D" id="2.70.210.12">
    <property type="entry name" value="GTP1/OBG domain"/>
    <property type="match status" value="1"/>
</dbReference>
<dbReference type="Gene3D" id="3.40.50.300">
    <property type="entry name" value="P-loop containing nucleotide triphosphate hydrolases"/>
    <property type="match status" value="1"/>
</dbReference>
<dbReference type="HAMAP" id="MF_01454">
    <property type="entry name" value="GTPase_Obg"/>
    <property type="match status" value="1"/>
</dbReference>
<dbReference type="InterPro" id="IPR031167">
    <property type="entry name" value="G_OBG"/>
</dbReference>
<dbReference type="InterPro" id="IPR006073">
    <property type="entry name" value="GTP-bd"/>
</dbReference>
<dbReference type="InterPro" id="IPR014100">
    <property type="entry name" value="GTP-bd_Obg/CgtA"/>
</dbReference>
<dbReference type="InterPro" id="IPR006074">
    <property type="entry name" value="GTP1-OBG_CS"/>
</dbReference>
<dbReference type="InterPro" id="IPR006169">
    <property type="entry name" value="GTP1_OBG_dom"/>
</dbReference>
<dbReference type="InterPro" id="IPR036726">
    <property type="entry name" value="GTP1_OBG_dom_sf"/>
</dbReference>
<dbReference type="InterPro" id="IPR045086">
    <property type="entry name" value="OBG_GTPase"/>
</dbReference>
<dbReference type="InterPro" id="IPR027417">
    <property type="entry name" value="P-loop_NTPase"/>
</dbReference>
<dbReference type="NCBIfam" id="TIGR02729">
    <property type="entry name" value="Obg_CgtA"/>
    <property type="match status" value="1"/>
</dbReference>
<dbReference type="NCBIfam" id="NF008955">
    <property type="entry name" value="PRK12297.1"/>
    <property type="match status" value="1"/>
</dbReference>
<dbReference type="NCBIfam" id="NF008956">
    <property type="entry name" value="PRK12299.1"/>
    <property type="match status" value="1"/>
</dbReference>
<dbReference type="PANTHER" id="PTHR11702">
    <property type="entry name" value="DEVELOPMENTALLY REGULATED GTP-BINDING PROTEIN-RELATED"/>
    <property type="match status" value="1"/>
</dbReference>
<dbReference type="PANTHER" id="PTHR11702:SF31">
    <property type="entry name" value="MITOCHONDRIAL RIBOSOME-ASSOCIATED GTPASE 2"/>
    <property type="match status" value="1"/>
</dbReference>
<dbReference type="Pfam" id="PF01018">
    <property type="entry name" value="GTP1_OBG"/>
    <property type="match status" value="1"/>
</dbReference>
<dbReference type="Pfam" id="PF01926">
    <property type="entry name" value="MMR_HSR1"/>
    <property type="match status" value="1"/>
</dbReference>
<dbReference type="PIRSF" id="PIRSF002401">
    <property type="entry name" value="GTP_bd_Obg/CgtA"/>
    <property type="match status" value="1"/>
</dbReference>
<dbReference type="PRINTS" id="PR00326">
    <property type="entry name" value="GTP1OBG"/>
</dbReference>
<dbReference type="SUPFAM" id="SSF82051">
    <property type="entry name" value="Obg GTP-binding protein N-terminal domain"/>
    <property type="match status" value="1"/>
</dbReference>
<dbReference type="SUPFAM" id="SSF52540">
    <property type="entry name" value="P-loop containing nucleoside triphosphate hydrolases"/>
    <property type="match status" value="1"/>
</dbReference>
<dbReference type="PROSITE" id="PS51710">
    <property type="entry name" value="G_OBG"/>
    <property type="match status" value="1"/>
</dbReference>
<dbReference type="PROSITE" id="PS00905">
    <property type="entry name" value="GTP1_OBG"/>
    <property type="match status" value="1"/>
</dbReference>
<dbReference type="PROSITE" id="PS51883">
    <property type="entry name" value="OBG"/>
    <property type="match status" value="1"/>
</dbReference>
<feature type="chain" id="PRO_0000386252" description="GTPase Obg">
    <location>
        <begin position="1"/>
        <end position="388"/>
    </location>
</feature>
<feature type="domain" description="Obg" evidence="2">
    <location>
        <begin position="1"/>
        <end position="159"/>
    </location>
</feature>
<feature type="domain" description="OBG-type G" evidence="1">
    <location>
        <begin position="160"/>
        <end position="333"/>
    </location>
</feature>
<feature type="binding site" evidence="1">
    <location>
        <begin position="166"/>
        <end position="173"/>
    </location>
    <ligand>
        <name>GTP</name>
        <dbReference type="ChEBI" id="CHEBI:37565"/>
    </ligand>
</feature>
<feature type="binding site" evidence="1">
    <location>
        <position position="173"/>
    </location>
    <ligand>
        <name>Mg(2+)</name>
        <dbReference type="ChEBI" id="CHEBI:18420"/>
    </ligand>
</feature>
<feature type="binding site" evidence="1">
    <location>
        <begin position="191"/>
        <end position="195"/>
    </location>
    <ligand>
        <name>GTP</name>
        <dbReference type="ChEBI" id="CHEBI:37565"/>
    </ligand>
</feature>
<feature type="binding site" evidence="1">
    <location>
        <position position="193"/>
    </location>
    <ligand>
        <name>Mg(2+)</name>
        <dbReference type="ChEBI" id="CHEBI:18420"/>
    </ligand>
</feature>
<feature type="binding site" evidence="1">
    <location>
        <begin position="213"/>
        <end position="216"/>
    </location>
    <ligand>
        <name>GTP</name>
        <dbReference type="ChEBI" id="CHEBI:37565"/>
    </ligand>
</feature>
<feature type="binding site" evidence="1">
    <location>
        <begin position="283"/>
        <end position="286"/>
    </location>
    <ligand>
        <name>GTP</name>
        <dbReference type="ChEBI" id="CHEBI:37565"/>
    </ligand>
</feature>
<feature type="binding site" evidence="1">
    <location>
        <begin position="314"/>
        <end position="316"/>
    </location>
    <ligand>
        <name>GTP</name>
        <dbReference type="ChEBI" id="CHEBI:37565"/>
    </ligand>
</feature>